<name>HLD_STAAW</name>
<feature type="peptide" id="PRO_0000035646" description="Delta-hemolysin">
    <location>
        <begin position="1"/>
        <end position="26"/>
    </location>
</feature>
<feature type="modified residue" description="N-formylmethionine" evidence="1">
    <location>
        <position position="1"/>
    </location>
</feature>
<evidence type="ECO:0000250" key="1"/>
<evidence type="ECO:0000305" key="2"/>
<accession>Q8NVK6</accession>
<keyword id="KW-0204">Cytolysis</keyword>
<keyword id="KW-0291">Formylation</keyword>
<keyword id="KW-0354">Hemolysis</keyword>
<keyword id="KW-1032">Host cell membrane</keyword>
<keyword id="KW-1043">Host membrane</keyword>
<keyword id="KW-0472">Membrane</keyword>
<keyword id="KW-0964">Secreted</keyword>
<keyword id="KW-0800">Toxin</keyword>
<keyword id="KW-0812">Transmembrane</keyword>
<keyword id="KW-0843">Virulence</keyword>
<dbReference type="EMBL" id="BA000033">
    <property type="protein sequence ID" value="BAB95824.1"/>
    <property type="status" value="ALT_INIT"/>
    <property type="molecule type" value="Genomic_DNA"/>
</dbReference>
<dbReference type="SMR" id="Q8NVK6"/>
<dbReference type="KEGG" id="sam:MW1959"/>
<dbReference type="HOGENOM" id="CLU_3222291_0_0_9"/>
<dbReference type="GO" id="GO:0005576">
    <property type="term" value="C:extracellular region"/>
    <property type="evidence" value="ECO:0007669"/>
    <property type="project" value="UniProtKB-SubCell"/>
</dbReference>
<dbReference type="GO" id="GO:0020002">
    <property type="term" value="C:host cell plasma membrane"/>
    <property type="evidence" value="ECO:0007669"/>
    <property type="project" value="UniProtKB-SubCell"/>
</dbReference>
<dbReference type="GO" id="GO:0016020">
    <property type="term" value="C:membrane"/>
    <property type="evidence" value="ECO:0007669"/>
    <property type="project" value="UniProtKB-KW"/>
</dbReference>
<dbReference type="GO" id="GO:0090729">
    <property type="term" value="F:toxin activity"/>
    <property type="evidence" value="ECO:0007669"/>
    <property type="project" value="UniProtKB-KW"/>
</dbReference>
<dbReference type="GO" id="GO:0019836">
    <property type="term" value="P:symbiont-mediated hemolysis of host erythrocyte"/>
    <property type="evidence" value="ECO:0007669"/>
    <property type="project" value="InterPro"/>
</dbReference>
<dbReference type="InterPro" id="IPR008034">
    <property type="entry name" value="Delta_lysin"/>
</dbReference>
<dbReference type="NCBIfam" id="NF011338">
    <property type="entry name" value="PRK14752.1-4"/>
    <property type="match status" value="1"/>
</dbReference>
<dbReference type="Pfam" id="PF05372">
    <property type="entry name" value="Delta_lysin"/>
    <property type="match status" value="1"/>
</dbReference>
<organism>
    <name type="scientific">Staphylococcus aureus (strain MW2)</name>
    <dbReference type="NCBI Taxonomy" id="196620"/>
    <lineage>
        <taxon>Bacteria</taxon>
        <taxon>Bacillati</taxon>
        <taxon>Bacillota</taxon>
        <taxon>Bacilli</taxon>
        <taxon>Bacillales</taxon>
        <taxon>Staphylococcaceae</taxon>
        <taxon>Staphylococcus</taxon>
    </lineage>
</organism>
<proteinExistence type="inferred from homology"/>
<protein>
    <recommendedName>
        <fullName>Delta-hemolysin</fullName>
        <shortName>Delta-lysin</shortName>
    </recommendedName>
    <alternativeName>
        <fullName>Delta-toxin</fullName>
    </alternativeName>
</protein>
<reference key="1">
    <citation type="journal article" date="2002" name="Lancet">
        <title>Genome and virulence determinants of high virulence community-acquired MRSA.</title>
        <authorList>
            <person name="Baba T."/>
            <person name="Takeuchi F."/>
            <person name="Kuroda M."/>
            <person name="Yuzawa H."/>
            <person name="Aoki K."/>
            <person name="Oguchi A."/>
            <person name="Nagai Y."/>
            <person name="Iwama N."/>
            <person name="Asano K."/>
            <person name="Naimi T."/>
            <person name="Kuroda H."/>
            <person name="Cui L."/>
            <person name="Yamamoto K."/>
            <person name="Hiramatsu K."/>
        </authorList>
    </citation>
    <scope>NUCLEOTIDE SEQUENCE [LARGE SCALE GENOMIC DNA]</scope>
    <source>
        <strain>MW2</strain>
    </source>
</reference>
<gene>
    <name type="primary">hld</name>
    <name type="ordered locus">MW1959</name>
</gene>
<sequence length="26" mass="3009">MAQDIISTISDLVKWIIDTVNKFTKK</sequence>
<comment type="function">
    <text evidence="1">Lyses erythrocytes and many other mammalian cells.</text>
</comment>
<comment type="subcellular location">
    <subcellularLocation>
        <location evidence="1">Secreted</location>
    </subcellularLocation>
    <subcellularLocation>
        <location evidence="1">Host cell membrane</location>
    </subcellularLocation>
    <text evidence="1">In infected cells, it is found in the membrane.</text>
</comment>
<comment type="similarity">
    <text evidence="2">Belongs to the delta-lysin family.</text>
</comment>
<comment type="sequence caution" evidence="2">
    <conflict type="erroneous initiation">
        <sequence resource="EMBL-CDS" id="BAB95824"/>
    </conflict>
</comment>